<comment type="function">
    <text evidence="1">Part of the ecpRABCDE operon, which encodes the E.coli common pilus (ECP). ECP is found in both commensal and pathogenic strains and plays a dual role in early-stage biofilm development and host cell recognition (By similarity).</text>
</comment>
<comment type="induction">
    <text evidence="1">Negatively regulated by H-NS. Positively regulated by IHF and EcpR (By similarity).</text>
</comment>
<comment type="similarity">
    <text evidence="3">Belongs to the EcpB/EcpE family.</text>
</comment>
<reference key="1">
    <citation type="submission" date="2008-02" db="EMBL/GenBank/DDBJ databases">
        <title>Complete sequence of Escherichia coli C str. ATCC 8739.</title>
        <authorList>
            <person name="Copeland A."/>
            <person name="Lucas S."/>
            <person name="Lapidus A."/>
            <person name="Glavina del Rio T."/>
            <person name="Dalin E."/>
            <person name="Tice H."/>
            <person name="Bruce D."/>
            <person name="Goodwin L."/>
            <person name="Pitluck S."/>
            <person name="Kiss H."/>
            <person name="Brettin T."/>
            <person name="Detter J.C."/>
            <person name="Han C."/>
            <person name="Kuske C.R."/>
            <person name="Schmutz J."/>
            <person name="Larimer F."/>
            <person name="Land M."/>
            <person name="Hauser L."/>
            <person name="Kyrpides N."/>
            <person name="Mikhailova N."/>
            <person name="Ingram L."/>
            <person name="Richardson P."/>
        </authorList>
    </citation>
    <scope>NUCLEOTIDE SEQUENCE [LARGE SCALE GENOMIC DNA]</scope>
    <source>
        <strain>ATCC 8739 / DSM 1576 / NBRC 3972 / NCIMB 8545 / WDCM 00012 / Crooks</strain>
    </source>
</reference>
<keyword id="KW-0143">Chaperone</keyword>
<keyword id="KW-1029">Fimbrium biogenesis</keyword>
<keyword id="KW-0732">Signal</keyword>
<feature type="signal peptide" evidence="2">
    <location>
        <begin position="1"/>
        <end position="20"/>
    </location>
</feature>
<feature type="chain" id="PRO_5000314441" description="Probable fimbrial chaperone EcpB">
    <location>
        <begin position="21"/>
        <end position="222"/>
    </location>
</feature>
<proteinExistence type="inferred from homology"/>
<dbReference type="EMBL" id="CP000946">
    <property type="protein sequence ID" value="ACA78948.1"/>
    <property type="molecule type" value="Genomic_DNA"/>
</dbReference>
<dbReference type="RefSeq" id="WP_000716396.1">
    <property type="nucleotide sequence ID" value="NC_010468.1"/>
</dbReference>
<dbReference type="SMR" id="B1J0Y0"/>
<dbReference type="KEGG" id="ecl:EcolC_3327"/>
<dbReference type="HOGENOM" id="CLU_106652_0_0_6"/>
<dbReference type="Gene3D" id="2.60.40.10">
    <property type="entry name" value="Immunoglobulins"/>
    <property type="match status" value="1"/>
</dbReference>
<dbReference type="InterPro" id="IPR040695">
    <property type="entry name" value="EcpB_C"/>
</dbReference>
<dbReference type="InterPro" id="IPR013783">
    <property type="entry name" value="Ig-like_fold"/>
</dbReference>
<dbReference type="InterPro" id="IPR008962">
    <property type="entry name" value="PapD-like_sf"/>
</dbReference>
<dbReference type="Pfam" id="PF18649">
    <property type="entry name" value="EcpB_C"/>
    <property type="match status" value="1"/>
</dbReference>
<dbReference type="SUPFAM" id="SSF49354">
    <property type="entry name" value="PapD-like"/>
    <property type="match status" value="1"/>
</dbReference>
<evidence type="ECO:0000250" key="1"/>
<evidence type="ECO:0000255" key="2"/>
<evidence type="ECO:0000305" key="3"/>
<organism>
    <name type="scientific">Escherichia coli (strain ATCC 8739 / DSM 1576 / NBRC 3972 / NCIMB 8545 / WDCM 00012 / Crooks)</name>
    <dbReference type="NCBI Taxonomy" id="481805"/>
    <lineage>
        <taxon>Bacteria</taxon>
        <taxon>Pseudomonadati</taxon>
        <taxon>Pseudomonadota</taxon>
        <taxon>Gammaproteobacteria</taxon>
        <taxon>Enterobacterales</taxon>
        <taxon>Enterobacteriaceae</taxon>
        <taxon>Escherichia</taxon>
    </lineage>
</organism>
<sequence length="222" mass="24517">MKKHLLPLALLFSGISPAQALDVGDISSFMNSDSSTLSKTIKNSTDSGRLINIRLERLSSPLDDGQVISMDKPDELLLTPASLLLPAQASEVIRFFYKGPADEKERYYRIVWFDQALSDAQRDNANRSAVATASARIGTILAVAPRQANYHFQYANGSLTNTGNATLRILAYGPCLKAVNGKECKENYYLMPGKSRRFTRVDTADNKGRVALWQGDKFIPVK</sequence>
<accession>B1J0Y0</accession>
<name>ECPB_ECOLC</name>
<gene>
    <name type="primary">ecpB</name>
    <name type="synonym">matC</name>
    <name type="ordered locus">EcolC_3327</name>
</gene>
<protein>
    <recommendedName>
        <fullName>Probable fimbrial chaperone EcpB</fullName>
    </recommendedName>
</protein>